<keyword id="KW-1003">Cell membrane</keyword>
<keyword id="KW-0472">Membrane</keyword>
<keyword id="KW-0653">Protein transport</keyword>
<keyword id="KW-1185">Reference proteome</keyword>
<keyword id="KW-0811">Translocation</keyword>
<keyword id="KW-0812">Transmembrane</keyword>
<keyword id="KW-1133">Transmembrane helix</keyword>
<keyword id="KW-0813">Transport</keyword>
<evidence type="ECO:0000250" key="1"/>
<evidence type="ECO:0000305" key="2"/>
<comment type="function">
    <text evidence="1">Involved in protein export. The function of the beta subunit is unknown, but it may be involved in stabilization of the trimeric complex (By similarity).</text>
</comment>
<comment type="subunit">
    <text evidence="1">Component of the protein translocase complex. Heterotrimer consisting of alpha (SecY), beta (SecG) and gamma (SecE) subunits. Can form oligomers of the heterotrimer (By similarity).</text>
</comment>
<comment type="subcellular location">
    <subcellularLocation>
        <location evidence="1">Cell membrane</location>
        <topology evidence="1">Single-pass membrane protein</topology>
    </subcellularLocation>
</comment>
<comment type="similarity">
    <text evidence="2">Belongs to the SEC61-beta family.</text>
</comment>
<organism>
    <name type="scientific">Saccharolobus solfataricus (strain ATCC 35092 / DSM 1617 / JCM 11322 / P2)</name>
    <name type="common">Sulfolobus solfataricus</name>
    <dbReference type="NCBI Taxonomy" id="273057"/>
    <lineage>
        <taxon>Archaea</taxon>
        <taxon>Thermoproteota</taxon>
        <taxon>Thermoprotei</taxon>
        <taxon>Sulfolobales</taxon>
        <taxon>Sulfolobaceae</taxon>
        <taxon>Saccharolobus</taxon>
    </lineage>
</organism>
<proteinExistence type="inferred from homology"/>
<reference key="1">
    <citation type="journal article" date="2001" name="Proc. Natl. Acad. Sci. U.S.A.">
        <title>The complete genome of the crenarchaeon Sulfolobus solfataricus P2.</title>
        <authorList>
            <person name="She Q."/>
            <person name="Singh R.K."/>
            <person name="Confalonieri F."/>
            <person name="Zivanovic Y."/>
            <person name="Allard G."/>
            <person name="Awayez M.J."/>
            <person name="Chan-Weiher C.C.-Y."/>
            <person name="Clausen I.G."/>
            <person name="Curtis B.A."/>
            <person name="De Moors A."/>
            <person name="Erauso G."/>
            <person name="Fletcher C."/>
            <person name="Gordon P.M.K."/>
            <person name="Heikamp-de Jong I."/>
            <person name="Jeffries A.C."/>
            <person name="Kozera C.J."/>
            <person name="Medina N."/>
            <person name="Peng X."/>
            <person name="Thi-Ngoc H.P."/>
            <person name="Redder P."/>
            <person name="Schenk M.E."/>
            <person name="Theriault C."/>
            <person name="Tolstrup N."/>
            <person name="Charlebois R.L."/>
            <person name="Doolittle W.F."/>
            <person name="Duguet M."/>
            <person name="Gaasterland T."/>
            <person name="Garrett R.A."/>
            <person name="Ragan M.A."/>
            <person name="Sensen C.W."/>
            <person name="Van der Oost J."/>
        </authorList>
    </citation>
    <scope>NUCLEOTIDE SEQUENCE [LARGE SCALE GENOMIC DNA]</scope>
    <source>
        <strain>ATCC 35092 / DSM 1617 / JCM 11322 / P2</strain>
    </source>
</reference>
<protein>
    <recommendedName>
        <fullName>Preprotein translocase subunit SecG</fullName>
    </recommendedName>
    <alternativeName>
        <fullName>Protein transport protein Sec61 subunit beta homolog</fullName>
    </alternativeName>
</protein>
<gene>
    <name type="primary">secG</name>
    <name type="ordered locus">SSO5522.1</name>
</gene>
<dbReference type="EMBL" id="AE006641">
    <property type="status" value="NOT_ANNOTATED_CDS"/>
    <property type="molecule type" value="Genomic_DNA"/>
</dbReference>
<dbReference type="RefSeq" id="WP_009990527.1">
    <property type="nucleotide sequence ID" value="NC_002754.1"/>
</dbReference>
<dbReference type="SMR" id="P60465"/>
<dbReference type="InParanoid" id="P60465"/>
<dbReference type="PhylomeDB" id="P60465"/>
<dbReference type="Proteomes" id="UP000001974">
    <property type="component" value="Chromosome"/>
</dbReference>
<dbReference type="GO" id="GO:0005886">
    <property type="term" value="C:plasma membrane"/>
    <property type="evidence" value="ECO:0007669"/>
    <property type="project" value="UniProtKB-SubCell"/>
</dbReference>
<dbReference type="GO" id="GO:0015031">
    <property type="term" value="P:protein transport"/>
    <property type="evidence" value="ECO:0007669"/>
    <property type="project" value="UniProtKB-UniRule"/>
</dbReference>
<dbReference type="HAMAP" id="MF_00751">
    <property type="entry name" value="SecG"/>
    <property type="match status" value="1"/>
</dbReference>
<dbReference type="InterPro" id="IPR023531">
    <property type="entry name" value="Preprot_translocase_SecG"/>
</dbReference>
<dbReference type="InterPro" id="IPR016482">
    <property type="entry name" value="SecG/Sec61-beta/Sbh"/>
</dbReference>
<dbReference type="NCBIfam" id="NF002318">
    <property type="entry name" value="PRK01253.1"/>
    <property type="match status" value="1"/>
</dbReference>
<dbReference type="Pfam" id="PF03911">
    <property type="entry name" value="Sec61_beta"/>
    <property type="match status" value="1"/>
</dbReference>
<accession>P60465</accession>
<feature type="chain" id="PRO_0000157279" description="Preprotein translocase subunit SecG">
    <location>
        <begin position="1"/>
        <end position="55"/>
    </location>
</feature>
<feature type="topological domain" description="Cytoplasmic" evidence="1">
    <location>
        <begin position="1"/>
        <end position="33"/>
    </location>
</feature>
<feature type="transmembrane region" description="Helical" evidence="1">
    <location>
        <begin position="34"/>
        <end position="53"/>
    </location>
</feature>
<feature type="topological domain" description="Extracellular" evidence="1">
    <location>
        <begin position="54"/>
        <end position="55"/>
    </location>
</feature>
<sequence>MPSSKKKKETVPVMSMAGLIRYYEEENEKVKISPKIVIGASLALTIIVIVITKLF</sequence>
<name>SECG_SACS2</name>